<dbReference type="EC" id="2.7.7.6" evidence="1"/>
<dbReference type="EMBL" id="AE015928">
    <property type="protein sequence ID" value="AAO77807.1"/>
    <property type="molecule type" value="Genomic_DNA"/>
</dbReference>
<dbReference type="RefSeq" id="NP_811613.1">
    <property type="nucleotide sequence ID" value="NC_004663.1"/>
</dbReference>
<dbReference type="RefSeq" id="WP_008762051.1">
    <property type="nucleotide sequence ID" value="NZ_UYXG01000001.1"/>
</dbReference>
<dbReference type="SMR" id="Q8A4A2"/>
<dbReference type="FunCoup" id="Q8A4A2">
    <property type="interactions" value="492"/>
</dbReference>
<dbReference type="STRING" id="226186.BT_2701"/>
<dbReference type="PaxDb" id="226186-BT_2701"/>
<dbReference type="EnsemblBacteria" id="AAO77807">
    <property type="protein sequence ID" value="AAO77807"/>
    <property type="gene ID" value="BT_2701"/>
</dbReference>
<dbReference type="KEGG" id="bth:BT_2701"/>
<dbReference type="PATRIC" id="fig|226186.12.peg.2743"/>
<dbReference type="eggNOG" id="COG0202">
    <property type="taxonomic scope" value="Bacteria"/>
</dbReference>
<dbReference type="HOGENOM" id="CLU_053084_0_1_10"/>
<dbReference type="InParanoid" id="Q8A4A2"/>
<dbReference type="OrthoDB" id="9805706at2"/>
<dbReference type="Proteomes" id="UP000001414">
    <property type="component" value="Chromosome"/>
</dbReference>
<dbReference type="GO" id="GO:0005737">
    <property type="term" value="C:cytoplasm"/>
    <property type="evidence" value="ECO:0000318"/>
    <property type="project" value="GO_Central"/>
</dbReference>
<dbReference type="GO" id="GO:0000428">
    <property type="term" value="C:DNA-directed RNA polymerase complex"/>
    <property type="evidence" value="ECO:0007669"/>
    <property type="project" value="UniProtKB-KW"/>
</dbReference>
<dbReference type="GO" id="GO:0003677">
    <property type="term" value="F:DNA binding"/>
    <property type="evidence" value="ECO:0007669"/>
    <property type="project" value="UniProtKB-UniRule"/>
</dbReference>
<dbReference type="GO" id="GO:0003899">
    <property type="term" value="F:DNA-directed RNA polymerase activity"/>
    <property type="evidence" value="ECO:0007669"/>
    <property type="project" value="UniProtKB-UniRule"/>
</dbReference>
<dbReference type="GO" id="GO:0046983">
    <property type="term" value="F:protein dimerization activity"/>
    <property type="evidence" value="ECO:0007669"/>
    <property type="project" value="InterPro"/>
</dbReference>
<dbReference type="GO" id="GO:0006351">
    <property type="term" value="P:DNA-templated transcription"/>
    <property type="evidence" value="ECO:0007669"/>
    <property type="project" value="UniProtKB-UniRule"/>
</dbReference>
<dbReference type="CDD" id="cd06928">
    <property type="entry name" value="RNAP_alpha_NTD"/>
    <property type="match status" value="1"/>
</dbReference>
<dbReference type="FunFam" id="1.10.150.20:FF:000020">
    <property type="entry name" value="DNA-directed RNA polymerase subunit alpha"/>
    <property type="match status" value="1"/>
</dbReference>
<dbReference type="FunFam" id="2.170.120.12:FF:000001">
    <property type="entry name" value="DNA-directed RNA polymerase subunit alpha"/>
    <property type="match status" value="1"/>
</dbReference>
<dbReference type="Gene3D" id="1.10.150.20">
    <property type="entry name" value="5' to 3' exonuclease, C-terminal subdomain"/>
    <property type="match status" value="1"/>
</dbReference>
<dbReference type="Gene3D" id="2.170.120.12">
    <property type="entry name" value="DNA-directed RNA polymerase, insert domain"/>
    <property type="match status" value="1"/>
</dbReference>
<dbReference type="Gene3D" id="3.30.1360.10">
    <property type="entry name" value="RNA polymerase, RBP11-like subunit"/>
    <property type="match status" value="1"/>
</dbReference>
<dbReference type="HAMAP" id="MF_00059">
    <property type="entry name" value="RNApol_bact_RpoA"/>
    <property type="match status" value="1"/>
</dbReference>
<dbReference type="InterPro" id="IPR011262">
    <property type="entry name" value="DNA-dir_RNA_pol_insert"/>
</dbReference>
<dbReference type="InterPro" id="IPR011263">
    <property type="entry name" value="DNA-dir_RNA_pol_RpoA/D/Rpb3"/>
</dbReference>
<dbReference type="InterPro" id="IPR011773">
    <property type="entry name" value="DNA-dir_RpoA"/>
</dbReference>
<dbReference type="InterPro" id="IPR036603">
    <property type="entry name" value="RBP11-like"/>
</dbReference>
<dbReference type="InterPro" id="IPR011260">
    <property type="entry name" value="RNAP_asu_C"/>
</dbReference>
<dbReference type="InterPro" id="IPR036643">
    <property type="entry name" value="RNApol_insert_sf"/>
</dbReference>
<dbReference type="NCBIfam" id="NF003513">
    <property type="entry name" value="PRK05182.1-2"/>
    <property type="match status" value="1"/>
</dbReference>
<dbReference type="NCBIfam" id="NF003516">
    <property type="entry name" value="PRK05182.2-2"/>
    <property type="match status" value="1"/>
</dbReference>
<dbReference type="NCBIfam" id="NF003519">
    <property type="entry name" value="PRK05182.2-5"/>
    <property type="match status" value="1"/>
</dbReference>
<dbReference type="NCBIfam" id="TIGR02027">
    <property type="entry name" value="rpoA"/>
    <property type="match status" value="1"/>
</dbReference>
<dbReference type="Pfam" id="PF01000">
    <property type="entry name" value="RNA_pol_A_bac"/>
    <property type="match status" value="1"/>
</dbReference>
<dbReference type="Pfam" id="PF03118">
    <property type="entry name" value="RNA_pol_A_CTD"/>
    <property type="match status" value="1"/>
</dbReference>
<dbReference type="Pfam" id="PF01193">
    <property type="entry name" value="RNA_pol_L"/>
    <property type="match status" value="1"/>
</dbReference>
<dbReference type="SMART" id="SM00662">
    <property type="entry name" value="RPOLD"/>
    <property type="match status" value="1"/>
</dbReference>
<dbReference type="SUPFAM" id="SSF47789">
    <property type="entry name" value="C-terminal domain of RNA polymerase alpha subunit"/>
    <property type="match status" value="1"/>
</dbReference>
<dbReference type="SUPFAM" id="SSF56553">
    <property type="entry name" value="Insert subdomain of RNA polymerase alpha subunit"/>
    <property type="match status" value="1"/>
</dbReference>
<dbReference type="SUPFAM" id="SSF55257">
    <property type="entry name" value="RBP11-like subunits of RNA polymerase"/>
    <property type="match status" value="1"/>
</dbReference>
<keyword id="KW-0240">DNA-directed RNA polymerase</keyword>
<keyword id="KW-0548">Nucleotidyltransferase</keyword>
<keyword id="KW-1185">Reference proteome</keyword>
<keyword id="KW-0804">Transcription</keyword>
<keyword id="KW-0808">Transferase</keyword>
<gene>
    <name evidence="1" type="primary">rpoA</name>
    <name type="ordered locus">BT_2701</name>
</gene>
<proteinExistence type="inferred from homology"/>
<reference key="1">
    <citation type="journal article" date="2003" name="Science">
        <title>A genomic view of the human-Bacteroides thetaiotaomicron symbiosis.</title>
        <authorList>
            <person name="Xu J."/>
            <person name="Bjursell M.K."/>
            <person name="Himrod J."/>
            <person name="Deng S."/>
            <person name="Carmichael L.K."/>
            <person name="Chiang H.C."/>
            <person name="Hooper L.V."/>
            <person name="Gordon J.I."/>
        </authorList>
    </citation>
    <scope>NUCLEOTIDE SEQUENCE [LARGE SCALE GENOMIC DNA]</scope>
    <source>
        <strain>ATCC 29148 / DSM 2079 / JCM 5827 / CCUG 10774 / NCTC 10582 / VPI-5482 / E50</strain>
    </source>
</reference>
<sequence>MAILAFQKPDKVLMLEADSRFGKFEFRPLEPGFGITVGNALRRILLSSLEGFAITTIRIDGVEHEFSSVPGVKEDVTNIILNLKQVRFKQVVEEFESEKVSITVENSSEFKAGDIGKYLTGFEVLNPELVICHLDSKATMQIDITINKGRGYVPADENREYCTDVNVIPIDSIYTPIRNVKYAVENFRVEQKTDYEKLVLEISTDGSIHPKEALKEAAKILIYHFMLFSDEKITLESNDTDGNEEFDEEVLHMRQLLKTKLVDMDLSVRALNCLKAADVETLGDLVQFNKTDLLKFRNFGKKSLTELDDLLESLNLSFGTDISKYKLDKE</sequence>
<protein>
    <recommendedName>
        <fullName evidence="1">DNA-directed RNA polymerase subunit alpha</fullName>
        <shortName evidence="1">RNAP subunit alpha</shortName>
        <ecNumber evidence="1">2.7.7.6</ecNumber>
    </recommendedName>
    <alternativeName>
        <fullName evidence="1">RNA polymerase subunit alpha</fullName>
    </alternativeName>
    <alternativeName>
        <fullName evidence="1">Transcriptase subunit alpha</fullName>
    </alternativeName>
</protein>
<accession>Q8A4A2</accession>
<evidence type="ECO:0000255" key="1">
    <source>
        <dbReference type="HAMAP-Rule" id="MF_00059"/>
    </source>
</evidence>
<feature type="chain" id="PRO_0000175266" description="DNA-directed RNA polymerase subunit alpha">
    <location>
        <begin position="1"/>
        <end position="330"/>
    </location>
</feature>
<feature type="region of interest" description="Alpha N-terminal domain (alpha-NTD)" evidence="1">
    <location>
        <begin position="1"/>
        <end position="232"/>
    </location>
</feature>
<feature type="region of interest" description="Alpha C-terminal domain (alpha-CTD)" evidence="1">
    <location>
        <begin position="248"/>
        <end position="330"/>
    </location>
</feature>
<comment type="function">
    <text evidence="1">DNA-dependent RNA polymerase catalyzes the transcription of DNA into RNA using the four ribonucleoside triphosphates as substrates.</text>
</comment>
<comment type="catalytic activity">
    <reaction evidence="1">
        <text>RNA(n) + a ribonucleoside 5'-triphosphate = RNA(n+1) + diphosphate</text>
        <dbReference type="Rhea" id="RHEA:21248"/>
        <dbReference type="Rhea" id="RHEA-COMP:14527"/>
        <dbReference type="Rhea" id="RHEA-COMP:17342"/>
        <dbReference type="ChEBI" id="CHEBI:33019"/>
        <dbReference type="ChEBI" id="CHEBI:61557"/>
        <dbReference type="ChEBI" id="CHEBI:140395"/>
        <dbReference type="EC" id="2.7.7.6"/>
    </reaction>
</comment>
<comment type="subunit">
    <text evidence="1">Homodimer. The RNAP catalytic core consists of 2 alpha, 1 beta, 1 beta' and 1 omega subunit. When a sigma factor is associated with the core the holoenzyme is formed, which can initiate transcription.</text>
</comment>
<comment type="domain">
    <text evidence="1">The N-terminal domain is essential for RNAP assembly and basal transcription, whereas the C-terminal domain is involved in interaction with transcriptional regulators and with upstream promoter elements.</text>
</comment>
<comment type="similarity">
    <text evidence="1">Belongs to the RNA polymerase alpha chain family.</text>
</comment>
<organism>
    <name type="scientific">Bacteroides thetaiotaomicron (strain ATCC 29148 / DSM 2079 / JCM 5827 / CCUG 10774 / NCTC 10582 / VPI-5482 / E50)</name>
    <dbReference type="NCBI Taxonomy" id="226186"/>
    <lineage>
        <taxon>Bacteria</taxon>
        <taxon>Pseudomonadati</taxon>
        <taxon>Bacteroidota</taxon>
        <taxon>Bacteroidia</taxon>
        <taxon>Bacteroidales</taxon>
        <taxon>Bacteroidaceae</taxon>
        <taxon>Bacteroides</taxon>
    </lineage>
</organism>
<name>RPOA_BACTN</name>